<proteinExistence type="evidence at protein level"/>
<keyword id="KW-0134">Cell wall</keyword>
<keyword id="KW-0325">Glycoprotein</keyword>
<keyword id="KW-0336">GPI-anchor</keyword>
<keyword id="KW-0449">Lipoprotein</keyword>
<keyword id="KW-0472">Membrane</keyword>
<keyword id="KW-1185">Reference proteome</keyword>
<keyword id="KW-0964">Secreted</keyword>
<keyword id="KW-0732">Signal</keyword>
<accession>Q5AF41</accession>
<accession>A0A1D8PLK8</accession>
<comment type="function">
    <text evidence="9">Cell wall protein necessary for cell wall integrity. Plays only a minor role in hyphal morphogenesis and is not critical to biofilm formation.</text>
</comment>
<comment type="subcellular location">
    <subcellularLocation>
        <location evidence="9 10">Secreted</location>
        <location evidence="9 10">Cell wall</location>
    </subcellularLocation>
    <subcellularLocation>
        <location evidence="11">Membrane</location>
        <topology evidence="11">Lipid-anchor</topology>
        <topology evidence="11">GPI-anchor</topology>
    </subcellularLocation>
</comment>
<comment type="induction">
    <text evidence="3 4 5 6 7 8">Induced during cell well regeneration, by fluconazole, and in high iron conditions. Expression is also induced by TBF1 and repressed by SSK1, and CYR1 or RAS1.</text>
</comment>
<comment type="PTM">
    <text evidence="9">N- and O-glycosylated.</text>
</comment>
<comment type="PTM">
    <text>The GPI-anchor is attached to the protein in the endoplasmic reticulum and serves to target the protein to the cell surface. There, the glucosamine-inositol phospholipid moiety is cleaved off and the GPI-modified mannoprotein is covalently attached via its lipidless GPI glycan remnant to the 1,6-beta-glucan of the outer cell wall layer.</text>
</comment>
<comment type="disruption phenotype">
    <text evidence="9">Leads to an altered cell wall structure with a less electron dense inner layer of the cell wall, and a disorganized outer layer.</text>
</comment>
<comment type="similarity">
    <text evidence="11">Belongs to the HWP1 family.</text>
</comment>
<name>PGA62_CANAL</name>
<organism>
    <name type="scientific">Candida albicans (strain SC5314 / ATCC MYA-2876)</name>
    <name type="common">Yeast</name>
    <dbReference type="NCBI Taxonomy" id="237561"/>
    <lineage>
        <taxon>Eukaryota</taxon>
        <taxon>Fungi</taxon>
        <taxon>Dikarya</taxon>
        <taxon>Ascomycota</taxon>
        <taxon>Saccharomycotina</taxon>
        <taxon>Pichiomycetes</taxon>
        <taxon>Debaryomycetaceae</taxon>
        <taxon>Candida/Lodderomyces clade</taxon>
        <taxon>Candida</taxon>
    </lineage>
</organism>
<dbReference type="EMBL" id="CP017626">
    <property type="protein sequence ID" value="AOW29008.1"/>
    <property type="molecule type" value="Genomic_DNA"/>
</dbReference>
<dbReference type="RefSeq" id="XP_720515.1">
    <property type="nucleotide sequence ID" value="XM_715422.1"/>
</dbReference>
<dbReference type="STRING" id="237561.Q5AF41"/>
<dbReference type="GlyCosmos" id="Q5AF41">
    <property type="glycosylation" value="1 site, No reported glycans"/>
</dbReference>
<dbReference type="EnsemblFungi" id="C4_02390W_A-T">
    <property type="protein sequence ID" value="C4_02390W_A-T-p1"/>
    <property type="gene ID" value="C4_02390W_A"/>
</dbReference>
<dbReference type="GeneID" id="3637879"/>
<dbReference type="KEGG" id="cal:CAALFM_C402390WA"/>
<dbReference type="CGD" id="CAL0000178718">
    <property type="gene designation" value="PGA62"/>
</dbReference>
<dbReference type="VEuPathDB" id="FungiDB:C4_02390W_A"/>
<dbReference type="eggNOG" id="ENOG502SDE4">
    <property type="taxonomic scope" value="Eukaryota"/>
</dbReference>
<dbReference type="HOGENOM" id="CLU_105987_0_0_1"/>
<dbReference type="InParanoid" id="Q5AF41"/>
<dbReference type="OMA" id="DNACHTE"/>
<dbReference type="OrthoDB" id="10591344at2759"/>
<dbReference type="PRO" id="PR:Q5AF41"/>
<dbReference type="Proteomes" id="UP000000559">
    <property type="component" value="Chromosome 4"/>
</dbReference>
<dbReference type="GO" id="GO:0005576">
    <property type="term" value="C:extracellular region"/>
    <property type="evidence" value="ECO:0007669"/>
    <property type="project" value="UniProtKB-KW"/>
</dbReference>
<dbReference type="GO" id="GO:0009277">
    <property type="term" value="C:fungal-type cell wall"/>
    <property type="evidence" value="ECO:0000314"/>
    <property type="project" value="CGD"/>
</dbReference>
<dbReference type="GO" id="GO:0030446">
    <property type="term" value="C:hyphal cell wall"/>
    <property type="evidence" value="ECO:0000314"/>
    <property type="project" value="CGD"/>
</dbReference>
<dbReference type="GO" id="GO:0098552">
    <property type="term" value="C:side of membrane"/>
    <property type="evidence" value="ECO:0007669"/>
    <property type="project" value="UniProtKB-KW"/>
</dbReference>
<dbReference type="GO" id="GO:0031505">
    <property type="term" value="P:fungal-type cell wall organization"/>
    <property type="evidence" value="ECO:0000314"/>
    <property type="project" value="CGD"/>
</dbReference>
<dbReference type="InterPro" id="IPR025928">
    <property type="entry name" value="Flocculin_t3_rpt"/>
</dbReference>
<dbReference type="Pfam" id="PF13928">
    <property type="entry name" value="Flocculin_t3"/>
    <property type="match status" value="2"/>
</dbReference>
<feature type="signal peptide" evidence="1">
    <location>
        <begin position="1"/>
        <end position="18"/>
    </location>
</feature>
<feature type="chain" id="PRO_0000424733" description="Cell wall protein PGA62">
    <location>
        <begin position="19"/>
        <end position="194"/>
    </location>
</feature>
<feature type="propeptide" id="PRO_0000424734" description="Removed in mature form" evidence="1">
    <location>
        <begin position="195"/>
        <end position="213"/>
    </location>
</feature>
<feature type="region of interest" description="Disordered" evidence="2">
    <location>
        <begin position="120"/>
        <end position="194"/>
    </location>
</feature>
<feature type="compositionally biased region" description="Polar residues" evidence="2">
    <location>
        <begin position="145"/>
        <end position="172"/>
    </location>
</feature>
<feature type="compositionally biased region" description="Low complexity" evidence="2">
    <location>
        <begin position="173"/>
        <end position="194"/>
    </location>
</feature>
<feature type="lipid moiety-binding region" description="GPI-anchor amidated glycine" evidence="1">
    <location>
        <position position="194"/>
    </location>
</feature>
<feature type="glycosylation site" description="N-linked (GlcNAc...) asparagine" evidence="1">
    <location>
        <position position="22"/>
    </location>
</feature>
<protein>
    <recommendedName>
        <fullName>Cell wall protein PGA62</fullName>
    </recommendedName>
    <alternativeName>
        <fullName>Flocculation protein 1</fullName>
    </alternativeName>
    <alternativeName>
        <fullName>GPI-anchored protein 62</fullName>
    </alternativeName>
</protein>
<evidence type="ECO:0000255" key="1"/>
<evidence type="ECO:0000256" key="2">
    <source>
        <dbReference type="SAM" id="MobiDB-lite"/>
    </source>
</evidence>
<evidence type="ECO:0000269" key="3">
    <source>
    </source>
</evidence>
<evidence type="ECO:0000269" key="4">
    <source>
    </source>
</evidence>
<evidence type="ECO:0000269" key="5">
    <source>
    </source>
</evidence>
<evidence type="ECO:0000269" key="6">
    <source>
    </source>
</evidence>
<evidence type="ECO:0000269" key="7">
    <source>
    </source>
</evidence>
<evidence type="ECO:0000269" key="8">
    <source>
    </source>
</evidence>
<evidence type="ECO:0000269" key="9">
    <source>
    </source>
</evidence>
<evidence type="ECO:0000269" key="10">
    <source>
    </source>
</evidence>
<evidence type="ECO:0000305" key="11"/>
<reference key="1">
    <citation type="journal article" date="2004" name="Proc. Natl. Acad. Sci. U.S.A.">
        <title>The diploid genome sequence of Candida albicans.</title>
        <authorList>
            <person name="Jones T."/>
            <person name="Federspiel N.A."/>
            <person name="Chibana H."/>
            <person name="Dungan J."/>
            <person name="Kalman S."/>
            <person name="Magee B.B."/>
            <person name="Newport G."/>
            <person name="Thorstenson Y.R."/>
            <person name="Agabian N."/>
            <person name="Magee P.T."/>
            <person name="Davis R.W."/>
            <person name="Scherer S."/>
        </authorList>
    </citation>
    <scope>NUCLEOTIDE SEQUENCE [LARGE SCALE GENOMIC DNA]</scope>
    <source>
        <strain>SC5314 / ATCC MYA-2876</strain>
    </source>
</reference>
<reference key="2">
    <citation type="journal article" date="2007" name="Genome Biol.">
        <title>Assembly of the Candida albicans genome into sixteen supercontigs aligned on the eight chromosomes.</title>
        <authorList>
            <person name="van het Hoog M."/>
            <person name="Rast T.J."/>
            <person name="Martchenko M."/>
            <person name="Grindle S."/>
            <person name="Dignard D."/>
            <person name="Hogues H."/>
            <person name="Cuomo C."/>
            <person name="Berriman M."/>
            <person name="Scherer S."/>
            <person name="Magee B.B."/>
            <person name="Whiteway M."/>
            <person name="Chibana H."/>
            <person name="Nantel A."/>
            <person name="Magee P.T."/>
        </authorList>
    </citation>
    <scope>GENOME REANNOTATION</scope>
    <source>
        <strain>SC5314 / ATCC MYA-2876</strain>
    </source>
</reference>
<reference key="3">
    <citation type="journal article" date="2013" name="Genome Biol.">
        <title>Assembly of a phased diploid Candida albicans genome facilitates allele-specific measurements and provides a simple model for repeat and indel structure.</title>
        <authorList>
            <person name="Muzzey D."/>
            <person name="Schwartz K."/>
            <person name="Weissman J.S."/>
            <person name="Sherlock G."/>
        </authorList>
    </citation>
    <scope>NUCLEOTIDE SEQUENCE [LARGE SCALE GENOMIC DNA]</scope>
    <scope>GENOME REANNOTATION</scope>
    <source>
        <strain>SC5314 / ATCC MYA-2876</strain>
    </source>
</reference>
<reference key="4">
    <citation type="journal article" date="2003" name="Yeast">
        <title>Genome-wide identification of fungal GPI proteins.</title>
        <authorList>
            <person name="De Groot P.W."/>
            <person name="Hellingwerf K.J."/>
            <person name="Klis F.M."/>
        </authorList>
    </citation>
    <scope>PREDICTION OF GPI-ANCHOR</scope>
</reference>
<reference key="5">
    <citation type="journal article" date="2003" name="Eukaryot. Cell">
        <title>Candida albicans response regulator gene SSK1 regulates a subset of genes whose functions are associated with cell wall biosynthesis and adaptation to oxidative stress.</title>
        <authorList>
            <person name="Chauhan N."/>
            <person name="Inglis D."/>
            <person name="Roman E."/>
            <person name="Pla J."/>
            <person name="Li D."/>
            <person name="Calera J.A."/>
            <person name="Calderone R."/>
        </authorList>
    </citation>
    <scope>INDUCTION</scope>
</reference>
<reference key="6">
    <citation type="journal article" date="2004" name="Mol. Biol. Cell">
        <title>Transcription profiling of cyclic AMP signaling in Candida albicans.</title>
        <authorList>
            <person name="Harcus D."/>
            <person name="Nantel A."/>
            <person name="Marcil A."/>
            <person name="Rigby T."/>
            <person name="Whiteway M."/>
        </authorList>
    </citation>
    <scope>INDUCTION</scope>
</reference>
<reference key="7">
    <citation type="journal article" date="2004" name="Mol. Microbiol.">
        <title>Regulatory networks affected by iron availability in Candida albicans.</title>
        <authorList>
            <person name="Lan C.Y."/>
            <person name="Rodarte G."/>
            <person name="Murillo L.A."/>
            <person name="Jones T."/>
            <person name="Davis R.W."/>
            <person name="Dungan J."/>
            <person name="Newport G."/>
            <person name="Agabian N."/>
        </authorList>
    </citation>
    <scope>INDUCTION</scope>
</reference>
<reference key="8">
    <citation type="journal article" date="2006" name="Fungal Genet. Biol.">
        <title>Genomic response programs of Candida albicans following protoplasting and regeneration.</title>
        <authorList>
            <person name="Castillo L."/>
            <person name="Martinez A.I."/>
            <person name="Garcera A."/>
            <person name="Garcia-Martinez J."/>
            <person name="Ruiz-Herrera J."/>
            <person name="Valentin E."/>
            <person name="Sentandreu R."/>
        </authorList>
    </citation>
    <scope>INDUCTION</scope>
</reference>
<reference key="9">
    <citation type="journal article" date="2008" name="Acta Biochim. Biophys. Sin.">
        <title>DNA microarray analysis of fluconazole resistance in a laboratory Candida albicans strain.</title>
        <authorList>
            <person name="Yan L."/>
            <person name="Zhang J."/>
            <person name="Li M."/>
            <person name="Cao Y."/>
            <person name="Xu Z."/>
            <person name="Cao Y."/>
            <person name="Gao P."/>
            <person name="Wang Y."/>
            <person name="Jiang Y."/>
        </authorList>
    </citation>
    <scope>INDUCTION</scope>
</reference>
<reference key="10">
    <citation type="journal article" date="2008" name="Mol. Cell">
        <title>Transcription factor substitution during the evolution of fungal ribosome regulation.</title>
        <authorList>
            <person name="Hogues H."/>
            <person name="Lavoie H."/>
            <person name="Sellam A."/>
            <person name="Mangos M."/>
            <person name="Roemer T."/>
            <person name="Purisima E."/>
            <person name="Nantel A."/>
            <person name="Whiteway M."/>
        </authorList>
    </citation>
    <scope>INDUCTION</scope>
</reference>
<reference key="11">
    <citation type="journal article" date="2009" name="Fungal Genet. Biol.">
        <title>Trifluoromethanesulfonic acid-based proteomic analysis of cell wall and secreted proteins of the ascomycetous fungi Neurospora crassa and Candida albicans.</title>
        <authorList>
            <person name="Maddi A."/>
            <person name="Bowman S.M."/>
            <person name="Free S.J."/>
        </authorList>
    </citation>
    <scope>IDENTIFICATION BY MASS SPECTROMETRY</scope>
    <scope>SUBCELLULAR LOCATION</scope>
</reference>
<reference key="12">
    <citation type="journal article" date="2009" name="Microbiology">
        <title>The GPI-modified proteins Pga59 and Pga62 of Candida albicans are required for cell wall integrity.</title>
        <authorList>
            <person name="Moreno-Ruiz E."/>
            <person name="Ortu G."/>
            <person name="de Groot P.W."/>
            <person name="Cottier F."/>
            <person name="Loussert C."/>
            <person name="Prevost M.C."/>
            <person name="de Koster C."/>
            <person name="Klis F.M."/>
            <person name="Goyard S."/>
            <person name="d'Enfert C."/>
        </authorList>
    </citation>
    <scope>IDENTIFICATION BY MASS SPECTROMETRY</scope>
    <scope>SUBCELLULAR LOCATION</scope>
    <scope>GLYCOSYLATION</scope>
    <scope>FUNCTION</scope>
    <scope>DISRUPTION PHENOTYPE</scope>
</reference>
<gene>
    <name type="primary">PGA62</name>
    <name type="synonym">FLO1</name>
    <name type="ordered locus">CAALFM_C402390WA</name>
    <name type="ORF">CaO19.10281</name>
    <name type="ORF">CaO19.2765</name>
</gene>
<sequence>MQFSSAVVLSAVAGSALAAYSNSTVTDIQTTVVTITSCEENKCHETEVTTGVTTVTEVDTTYTTYCPLSTTEAPAPSTATDVSTTVVTITSCEEDKCHETAVTTGVTTVTEGTTIYTTYCPLPSTEAPGPAPSTAEESKPAESSPVPTTAAESSPAKTTAAESSPAQETTPKTVAAESSSAETTAPAVSTAEAGAAANAVPVAAGLLALAALF</sequence>